<keyword id="KW-0028">Amino-acid biosynthesis</keyword>
<keyword id="KW-0963">Cytoplasm</keyword>
<keyword id="KW-0521">NADP</keyword>
<keyword id="KW-0560">Oxidoreductase</keyword>
<keyword id="KW-0641">Proline biosynthesis</keyword>
<comment type="function">
    <text evidence="1">Catalyzes the NADPH-dependent reduction of L-glutamate 5-phosphate into L-glutamate 5-semialdehyde and phosphate. The product spontaneously undergoes cyclization to form 1-pyrroline-5-carboxylate.</text>
</comment>
<comment type="catalytic activity">
    <reaction evidence="1">
        <text>L-glutamate 5-semialdehyde + phosphate + NADP(+) = L-glutamyl 5-phosphate + NADPH + H(+)</text>
        <dbReference type="Rhea" id="RHEA:19541"/>
        <dbReference type="ChEBI" id="CHEBI:15378"/>
        <dbReference type="ChEBI" id="CHEBI:43474"/>
        <dbReference type="ChEBI" id="CHEBI:57783"/>
        <dbReference type="ChEBI" id="CHEBI:58066"/>
        <dbReference type="ChEBI" id="CHEBI:58274"/>
        <dbReference type="ChEBI" id="CHEBI:58349"/>
        <dbReference type="EC" id="1.2.1.41"/>
    </reaction>
</comment>
<comment type="pathway">
    <text evidence="1">Amino-acid biosynthesis; L-proline biosynthesis; L-glutamate 5-semialdehyde from L-glutamate: step 2/2.</text>
</comment>
<comment type="subcellular location">
    <subcellularLocation>
        <location evidence="1">Cytoplasm</location>
    </subcellularLocation>
</comment>
<comment type="similarity">
    <text evidence="1">Belongs to the gamma-glutamyl phosphate reductase family.</text>
</comment>
<feature type="chain" id="PRO_0000189810" description="Gamma-glutamyl phosphate reductase">
    <location>
        <begin position="1"/>
        <end position="416"/>
    </location>
</feature>
<accession>Q8DF94</accession>
<organism>
    <name type="scientific">Vibrio vulnificus (strain CMCP6)</name>
    <dbReference type="NCBI Taxonomy" id="216895"/>
    <lineage>
        <taxon>Bacteria</taxon>
        <taxon>Pseudomonadati</taxon>
        <taxon>Pseudomonadota</taxon>
        <taxon>Gammaproteobacteria</taxon>
        <taxon>Vibrionales</taxon>
        <taxon>Vibrionaceae</taxon>
        <taxon>Vibrio</taxon>
    </lineage>
</organism>
<reference key="1">
    <citation type="submission" date="2002-12" db="EMBL/GenBank/DDBJ databases">
        <title>Complete genome sequence of Vibrio vulnificus CMCP6.</title>
        <authorList>
            <person name="Rhee J.H."/>
            <person name="Kim S.Y."/>
            <person name="Chung S.S."/>
            <person name="Kim J.J."/>
            <person name="Moon Y.H."/>
            <person name="Jeong H."/>
            <person name="Choy H.E."/>
        </authorList>
    </citation>
    <scope>NUCLEOTIDE SEQUENCE [LARGE SCALE GENOMIC DNA]</scope>
    <source>
        <strain>CMCP6</strain>
    </source>
</reference>
<gene>
    <name evidence="1" type="primary">proA</name>
    <name type="ordered locus">VV1_0325</name>
</gene>
<sequence>MDLITLGKAAKDAAFQLATASTAQKNKALAIIADELEANAADILAANSKDIELGRQAGLSEAMLDRLLLNESRLNGIANDVRNVISLTDPVGSEIDSKVLENGMQLSRRRVPLGVVGVIYEARPNVTIDIAALCLKTGNASILRGGKETFFSNMELVKVIQSALAKAGLPAASVQYIEKPDRELVTQLLKLDDYVDMIIPRGGAGLHKMCKENSTIPVIIGGFGISHIFVDETADLAKSVDVVENAKAQRPSACNALDTLLVHERIAEQFLPMLVAKLNGKVTFVVEPKAKAYMTKAEQVRDASDGDFDTEWLSYTLGVKVVADVQEAIDHMREHNASHSDAIMTNHLQNAELFINSAGSAAVYVNASTRFTDGAQFGLGAEVAVSTQKLHARGPMGLEELTSYKWVGKANYLSRA</sequence>
<proteinExistence type="inferred from homology"/>
<evidence type="ECO:0000255" key="1">
    <source>
        <dbReference type="HAMAP-Rule" id="MF_00412"/>
    </source>
</evidence>
<dbReference type="EC" id="1.2.1.41" evidence="1"/>
<dbReference type="EMBL" id="AE016795">
    <property type="protein sequence ID" value="AAO08854.1"/>
    <property type="molecule type" value="Genomic_DNA"/>
</dbReference>
<dbReference type="SMR" id="Q8DF94"/>
<dbReference type="KEGG" id="vvu:VV1_0325"/>
<dbReference type="HOGENOM" id="CLU_030231_0_0_6"/>
<dbReference type="UniPathway" id="UPA00098">
    <property type="reaction ID" value="UER00360"/>
</dbReference>
<dbReference type="Proteomes" id="UP000002275">
    <property type="component" value="Chromosome 1"/>
</dbReference>
<dbReference type="GO" id="GO:0005737">
    <property type="term" value="C:cytoplasm"/>
    <property type="evidence" value="ECO:0007669"/>
    <property type="project" value="UniProtKB-SubCell"/>
</dbReference>
<dbReference type="GO" id="GO:0004350">
    <property type="term" value="F:glutamate-5-semialdehyde dehydrogenase activity"/>
    <property type="evidence" value="ECO:0007669"/>
    <property type="project" value="UniProtKB-UniRule"/>
</dbReference>
<dbReference type="GO" id="GO:0050661">
    <property type="term" value="F:NADP binding"/>
    <property type="evidence" value="ECO:0007669"/>
    <property type="project" value="InterPro"/>
</dbReference>
<dbReference type="GO" id="GO:0055129">
    <property type="term" value="P:L-proline biosynthetic process"/>
    <property type="evidence" value="ECO:0007669"/>
    <property type="project" value="UniProtKB-UniRule"/>
</dbReference>
<dbReference type="CDD" id="cd07079">
    <property type="entry name" value="ALDH_F18-19_ProA-GPR"/>
    <property type="match status" value="1"/>
</dbReference>
<dbReference type="FunFam" id="3.40.309.10:FF:000028">
    <property type="entry name" value="Gamma-glutamyl phosphate reductase"/>
    <property type="match status" value="1"/>
</dbReference>
<dbReference type="Gene3D" id="3.40.605.10">
    <property type="entry name" value="Aldehyde Dehydrogenase, Chain A, domain 1"/>
    <property type="match status" value="1"/>
</dbReference>
<dbReference type="Gene3D" id="3.40.309.10">
    <property type="entry name" value="Aldehyde Dehydrogenase, Chain A, domain 2"/>
    <property type="match status" value="1"/>
</dbReference>
<dbReference type="HAMAP" id="MF_00412">
    <property type="entry name" value="ProA"/>
    <property type="match status" value="1"/>
</dbReference>
<dbReference type="InterPro" id="IPR016161">
    <property type="entry name" value="Ald_DH/histidinol_DH"/>
</dbReference>
<dbReference type="InterPro" id="IPR016163">
    <property type="entry name" value="Ald_DH_C"/>
</dbReference>
<dbReference type="InterPro" id="IPR016162">
    <property type="entry name" value="Ald_DH_N"/>
</dbReference>
<dbReference type="InterPro" id="IPR015590">
    <property type="entry name" value="Aldehyde_DH_dom"/>
</dbReference>
<dbReference type="InterPro" id="IPR020593">
    <property type="entry name" value="G-glutamylP_reductase_CS"/>
</dbReference>
<dbReference type="InterPro" id="IPR012134">
    <property type="entry name" value="Glu-5-SA_DH"/>
</dbReference>
<dbReference type="InterPro" id="IPR000965">
    <property type="entry name" value="GPR_dom"/>
</dbReference>
<dbReference type="NCBIfam" id="NF001221">
    <property type="entry name" value="PRK00197.1"/>
    <property type="match status" value="1"/>
</dbReference>
<dbReference type="NCBIfam" id="TIGR00407">
    <property type="entry name" value="proA"/>
    <property type="match status" value="1"/>
</dbReference>
<dbReference type="PANTHER" id="PTHR11063:SF8">
    <property type="entry name" value="DELTA-1-PYRROLINE-5-CARBOXYLATE SYNTHASE"/>
    <property type="match status" value="1"/>
</dbReference>
<dbReference type="PANTHER" id="PTHR11063">
    <property type="entry name" value="GLUTAMATE SEMIALDEHYDE DEHYDROGENASE"/>
    <property type="match status" value="1"/>
</dbReference>
<dbReference type="Pfam" id="PF00171">
    <property type="entry name" value="Aldedh"/>
    <property type="match status" value="1"/>
</dbReference>
<dbReference type="PIRSF" id="PIRSF000151">
    <property type="entry name" value="GPR"/>
    <property type="match status" value="1"/>
</dbReference>
<dbReference type="SUPFAM" id="SSF53720">
    <property type="entry name" value="ALDH-like"/>
    <property type="match status" value="1"/>
</dbReference>
<dbReference type="PROSITE" id="PS01223">
    <property type="entry name" value="PROA"/>
    <property type="match status" value="1"/>
</dbReference>
<name>PROA_VIBVU</name>
<protein>
    <recommendedName>
        <fullName evidence="1">Gamma-glutamyl phosphate reductase</fullName>
        <shortName evidence="1">GPR</shortName>
        <ecNumber evidence="1">1.2.1.41</ecNumber>
    </recommendedName>
    <alternativeName>
        <fullName evidence="1">Glutamate-5-semialdehyde dehydrogenase</fullName>
    </alternativeName>
    <alternativeName>
        <fullName evidence="1">Glutamyl-gamma-semialdehyde dehydrogenase</fullName>
        <shortName evidence="1">GSA dehydrogenase</shortName>
    </alternativeName>
</protein>